<name>PYRE_LACLS</name>
<feature type="chain" id="PRO_1000066247" description="Orotate phosphoribosyltransferase">
    <location>
        <begin position="1"/>
        <end position="209"/>
    </location>
</feature>
<feature type="binding site" evidence="1">
    <location>
        <position position="96"/>
    </location>
    <ligand>
        <name>5-phospho-alpha-D-ribose 1-diphosphate</name>
        <dbReference type="ChEBI" id="CHEBI:58017"/>
        <note>ligand shared between dimeric partners</note>
    </ligand>
</feature>
<feature type="binding site" evidence="1">
    <location>
        <position position="100"/>
    </location>
    <ligand>
        <name>5-phospho-alpha-D-ribose 1-diphosphate</name>
        <dbReference type="ChEBI" id="CHEBI:58017"/>
        <note>ligand shared between dimeric partners</note>
    </ligand>
</feature>
<feature type="binding site" evidence="1">
    <location>
        <position position="102"/>
    </location>
    <ligand>
        <name>5-phospho-alpha-D-ribose 1-diphosphate</name>
        <dbReference type="ChEBI" id="CHEBI:58017"/>
        <note>ligand shared between dimeric partners</note>
    </ligand>
</feature>
<feature type="binding site" description="in other chain" evidence="1">
    <location>
        <begin position="122"/>
        <end position="130"/>
    </location>
    <ligand>
        <name>5-phospho-alpha-D-ribose 1-diphosphate</name>
        <dbReference type="ChEBI" id="CHEBI:58017"/>
        <note>ligand shared between dimeric partners</note>
    </ligand>
</feature>
<feature type="binding site" evidence="1">
    <location>
        <position position="126"/>
    </location>
    <ligand>
        <name>orotate</name>
        <dbReference type="ChEBI" id="CHEBI:30839"/>
    </ligand>
</feature>
<reference key="1">
    <citation type="journal article" date="2006" name="Proc. Natl. Acad. Sci. U.S.A.">
        <title>Comparative genomics of the lactic acid bacteria.</title>
        <authorList>
            <person name="Makarova K.S."/>
            <person name="Slesarev A."/>
            <person name="Wolf Y.I."/>
            <person name="Sorokin A."/>
            <person name="Mirkin B."/>
            <person name="Koonin E.V."/>
            <person name="Pavlov A."/>
            <person name="Pavlova N."/>
            <person name="Karamychev V."/>
            <person name="Polouchine N."/>
            <person name="Shakhova V."/>
            <person name="Grigoriev I."/>
            <person name="Lou Y."/>
            <person name="Rohksar D."/>
            <person name="Lucas S."/>
            <person name="Huang K."/>
            <person name="Goodstein D.M."/>
            <person name="Hawkins T."/>
            <person name="Plengvidhya V."/>
            <person name="Welker D."/>
            <person name="Hughes J."/>
            <person name="Goh Y."/>
            <person name="Benson A."/>
            <person name="Baldwin K."/>
            <person name="Lee J.-H."/>
            <person name="Diaz-Muniz I."/>
            <person name="Dosti B."/>
            <person name="Smeianov V."/>
            <person name="Wechter W."/>
            <person name="Barabote R."/>
            <person name="Lorca G."/>
            <person name="Altermann E."/>
            <person name="Barrangou R."/>
            <person name="Ganesan B."/>
            <person name="Xie Y."/>
            <person name="Rawsthorne H."/>
            <person name="Tamir D."/>
            <person name="Parker C."/>
            <person name="Breidt F."/>
            <person name="Broadbent J.R."/>
            <person name="Hutkins R."/>
            <person name="O'Sullivan D."/>
            <person name="Steele J."/>
            <person name="Unlu G."/>
            <person name="Saier M.H. Jr."/>
            <person name="Klaenhammer T."/>
            <person name="Richardson P."/>
            <person name="Kozyavkin S."/>
            <person name="Weimer B.C."/>
            <person name="Mills D.A."/>
        </authorList>
    </citation>
    <scope>NUCLEOTIDE SEQUENCE [LARGE SCALE GENOMIC DNA]</scope>
    <source>
        <strain>SK11</strain>
    </source>
</reference>
<sequence>MSISKAIAADLLEIKAVSLSPSQPFTWASGIKSPIYTDNRVTLAYPEVRSQIEGAFAELIKAEFPEVEVIAGTATAGIPHGAIIADYLKLPFAYIRSKPKDHGAGNQVEGRVAKGQKMVVVEDLISTGGSVLEAVAAAEREGADVLGVVAIFTYELEKANSKFAESGVKLATLTNYSELIEIAKETGYVTKEELELLKKFKENQETWQA</sequence>
<accession>Q02ZC9</accession>
<protein>
    <recommendedName>
        <fullName evidence="1">Orotate phosphoribosyltransferase</fullName>
        <shortName evidence="1">OPRT</shortName>
        <shortName evidence="1">OPRTase</shortName>
        <ecNumber evidence="1">2.4.2.10</ecNumber>
    </recommendedName>
</protein>
<keyword id="KW-0328">Glycosyltransferase</keyword>
<keyword id="KW-0460">Magnesium</keyword>
<keyword id="KW-0665">Pyrimidine biosynthesis</keyword>
<keyword id="KW-0808">Transferase</keyword>
<comment type="function">
    <text evidence="1">Catalyzes the transfer of a ribosyl phosphate group from 5-phosphoribose 1-diphosphate to orotate, leading to the formation of orotidine monophosphate (OMP).</text>
</comment>
<comment type="catalytic activity">
    <reaction evidence="1">
        <text>orotidine 5'-phosphate + diphosphate = orotate + 5-phospho-alpha-D-ribose 1-diphosphate</text>
        <dbReference type="Rhea" id="RHEA:10380"/>
        <dbReference type="ChEBI" id="CHEBI:30839"/>
        <dbReference type="ChEBI" id="CHEBI:33019"/>
        <dbReference type="ChEBI" id="CHEBI:57538"/>
        <dbReference type="ChEBI" id="CHEBI:58017"/>
        <dbReference type="EC" id="2.4.2.10"/>
    </reaction>
</comment>
<comment type="cofactor">
    <cofactor evidence="1">
        <name>Mg(2+)</name>
        <dbReference type="ChEBI" id="CHEBI:18420"/>
    </cofactor>
</comment>
<comment type="pathway">
    <text evidence="1">Pyrimidine metabolism; UMP biosynthesis via de novo pathway; UMP from orotate: step 1/2.</text>
</comment>
<comment type="subunit">
    <text evidence="1">Homodimer.</text>
</comment>
<comment type="similarity">
    <text evidence="1">Belongs to the purine/pyrimidine phosphoribosyltransferase family. PyrE subfamily.</text>
</comment>
<dbReference type="EC" id="2.4.2.10" evidence="1"/>
<dbReference type="EMBL" id="CP000425">
    <property type="protein sequence ID" value="ABJ72693.1"/>
    <property type="molecule type" value="Genomic_DNA"/>
</dbReference>
<dbReference type="RefSeq" id="WP_011676071.1">
    <property type="nucleotide sequence ID" value="NC_008527.1"/>
</dbReference>
<dbReference type="SMR" id="Q02ZC9"/>
<dbReference type="KEGG" id="llc:LACR_1159"/>
<dbReference type="HOGENOM" id="CLU_074878_1_1_9"/>
<dbReference type="UniPathway" id="UPA00070">
    <property type="reaction ID" value="UER00119"/>
</dbReference>
<dbReference type="Proteomes" id="UP000000240">
    <property type="component" value="Chromosome"/>
</dbReference>
<dbReference type="GO" id="GO:0000287">
    <property type="term" value="F:magnesium ion binding"/>
    <property type="evidence" value="ECO:0007669"/>
    <property type="project" value="UniProtKB-UniRule"/>
</dbReference>
<dbReference type="GO" id="GO:0004588">
    <property type="term" value="F:orotate phosphoribosyltransferase activity"/>
    <property type="evidence" value="ECO:0007669"/>
    <property type="project" value="UniProtKB-UniRule"/>
</dbReference>
<dbReference type="GO" id="GO:0044205">
    <property type="term" value="P:'de novo' UMP biosynthetic process"/>
    <property type="evidence" value="ECO:0007669"/>
    <property type="project" value="UniProtKB-UniRule"/>
</dbReference>
<dbReference type="GO" id="GO:0019856">
    <property type="term" value="P:pyrimidine nucleobase biosynthetic process"/>
    <property type="evidence" value="ECO:0007669"/>
    <property type="project" value="TreeGrafter"/>
</dbReference>
<dbReference type="CDD" id="cd06223">
    <property type="entry name" value="PRTases_typeI"/>
    <property type="match status" value="1"/>
</dbReference>
<dbReference type="Gene3D" id="3.40.50.2020">
    <property type="match status" value="1"/>
</dbReference>
<dbReference type="HAMAP" id="MF_01208">
    <property type="entry name" value="PyrE"/>
    <property type="match status" value="1"/>
</dbReference>
<dbReference type="InterPro" id="IPR023031">
    <property type="entry name" value="OPRT"/>
</dbReference>
<dbReference type="InterPro" id="IPR004467">
    <property type="entry name" value="Or_phspho_trans_dom"/>
</dbReference>
<dbReference type="InterPro" id="IPR000836">
    <property type="entry name" value="PRibTrfase_dom"/>
</dbReference>
<dbReference type="InterPro" id="IPR029057">
    <property type="entry name" value="PRTase-like"/>
</dbReference>
<dbReference type="NCBIfam" id="TIGR00336">
    <property type="entry name" value="pyrE"/>
    <property type="match status" value="1"/>
</dbReference>
<dbReference type="PANTHER" id="PTHR19278">
    <property type="entry name" value="OROTATE PHOSPHORIBOSYLTRANSFERASE"/>
    <property type="match status" value="1"/>
</dbReference>
<dbReference type="PANTHER" id="PTHR19278:SF9">
    <property type="entry name" value="URIDINE 5'-MONOPHOSPHATE SYNTHASE"/>
    <property type="match status" value="1"/>
</dbReference>
<dbReference type="Pfam" id="PF00156">
    <property type="entry name" value="Pribosyltran"/>
    <property type="match status" value="1"/>
</dbReference>
<dbReference type="SUPFAM" id="SSF53271">
    <property type="entry name" value="PRTase-like"/>
    <property type="match status" value="1"/>
</dbReference>
<dbReference type="PROSITE" id="PS00103">
    <property type="entry name" value="PUR_PYR_PR_TRANSFER"/>
    <property type="match status" value="1"/>
</dbReference>
<evidence type="ECO:0000255" key="1">
    <source>
        <dbReference type="HAMAP-Rule" id="MF_01208"/>
    </source>
</evidence>
<organism>
    <name type="scientific">Lactococcus lactis subsp. cremoris (strain SK11)</name>
    <dbReference type="NCBI Taxonomy" id="272622"/>
    <lineage>
        <taxon>Bacteria</taxon>
        <taxon>Bacillati</taxon>
        <taxon>Bacillota</taxon>
        <taxon>Bacilli</taxon>
        <taxon>Lactobacillales</taxon>
        <taxon>Streptococcaceae</taxon>
        <taxon>Lactococcus</taxon>
        <taxon>Lactococcus cremoris subsp. cremoris</taxon>
    </lineage>
</organism>
<proteinExistence type="inferred from homology"/>
<gene>
    <name evidence="1" type="primary">pyrE</name>
    <name type="ordered locus">LACR_1159</name>
</gene>